<feature type="chain" id="PRO_0000084270" description="Imitation switch two complex protein 1">
    <location>
        <begin position="1"/>
        <end position="1264"/>
    </location>
</feature>
<feature type="domain" description="WAC" evidence="2">
    <location>
        <begin position="23"/>
        <end position="130"/>
    </location>
</feature>
<feature type="domain" description="DDT" evidence="1">
    <location>
        <begin position="423"/>
        <end position="483"/>
    </location>
</feature>
<feature type="region of interest" description="Disordered" evidence="3">
    <location>
        <begin position="130"/>
        <end position="153"/>
    </location>
</feature>
<feature type="region of interest" description="Disordered" evidence="3">
    <location>
        <begin position="275"/>
        <end position="374"/>
    </location>
</feature>
<feature type="region of interest" description="Disordered" evidence="3">
    <location>
        <begin position="482"/>
        <end position="508"/>
    </location>
</feature>
<feature type="region of interest" description="Disordered" evidence="3">
    <location>
        <begin position="627"/>
        <end position="655"/>
    </location>
</feature>
<feature type="region of interest" description="Disordered" evidence="3">
    <location>
        <begin position="803"/>
        <end position="825"/>
    </location>
</feature>
<feature type="compositionally biased region" description="Low complexity" evidence="3">
    <location>
        <begin position="132"/>
        <end position="147"/>
    </location>
</feature>
<feature type="compositionally biased region" description="Polar residues" evidence="3">
    <location>
        <begin position="280"/>
        <end position="289"/>
    </location>
</feature>
<feature type="compositionally biased region" description="Polar residues" evidence="3">
    <location>
        <begin position="299"/>
        <end position="310"/>
    </location>
</feature>
<protein>
    <recommendedName>
        <fullName>Imitation switch two complex protein 1</fullName>
    </recommendedName>
</protein>
<name>ITC1_YEAST</name>
<keyword id="KW-0156">Chromatin regulator</keyword>
<keyword id="KW-0539">Nucleus</keyword>
<keyword id="KW-1185">Reference proteome</keyword>
<keyword id="KW-0678">Repressor</keyword>
<keyword id="KW-0804">Transcription</keyword>
<keyword id="KW-0805">Transcription regulation</keyword>
<proteinExistence type="evidence at protein level"/>
<evidence type="ECO:0000255" key="1">
    <source>
        <dbReference type="PROSITE-ProRule" id="PRU00063"/>
    </source>
</evidence>
<evidence type="ECO:0000255" key="2">
    <source>
        <dbReference type="PROSITE-ProRule" id="PRU00475"/>
    </source>
</evidence>
<evidence type="ECO:0000256" key="3">
    <source>
        <dbReference type="SAM" id="MobiDB-lite"/>
    </source>
</evidence>
<evidence type="ECO:0000269" key="4">
    <source>
    </source>
</evidence>
<evidence type="ECO:0000269" key="5">
    <source>
    </source>
</evidence>
<evidence type="ECO:0000269" key="6">
    <source>
    </source>
</evidence>
<evidence type="ECO:0000269" key="7">
    <source>
    </source>
</evidence>
<evidence type="ECO:0000269" key="8">
    <source>
    </source>
</evidence>
<evidence type="ECO:0000269" key="9">
    <source>
    </source>
</evidence>
<evidence type="ECO:0000269" key="10">
    <source>
    </source>
</evidence>
<evidence type="ECO:0000269" key="11">
    <source>
    </source>
</evidence>
<dbReference type="EMBL" id="Z72655">
    <property type="protein sequence ID" value="CAA96844.1"/>
    <property type="molecule type" value="Genomic_DNA"/>
</dbReference>
<dbReference type="EMBL" id="BK006941">
    <property type="protein sequence ID" value="DAA07977.1"/>
    <property type="molecule type" value="Genomic_DNA"/>
</dbReference>
<dbReference type="PIR" id="S64146">
    <property type="entry name" value="S64146"/>
</dbReference>
<dbReference type="RefSeq" id="NP_011382.1">
    <property type="nucleotide sequence ID" value="NM_001180998.1"/>
</dbReference>
<dbReference type="SMR" id="P53125"/>
<dbReference type="BioGRID" id="33119">
    <property type="interactions" value="280"/>
</dbReference>
<dbReference type="ComplexPortal" id="CPX-728">
    <property type="entry name" value="ISW2 chromatin remodeling complex"/>
</dbReference>
<dbReference type="ComplexPortal" id="CPX-734">
    <property type="entry name" value="ISW2 chromatin remodeling complex variant 2"/>
</dbReference>
<dbReference type="DIP" id="DIP-6737N"/>
<dbReference type="FunCoup" id="P53125">
    <property type="interactions" value="378"/>
</dbReference>
<dbReference type="IntAct" id="P53125">
    <property type="interactions" value="38"/>
</dbReference>
<dbReference type="MINT" id="P53125"/>
<dbReference type="STRING" id="4932.YGL133W"/>
<dbReference type="GlyGen" id="P53125">
    <property type="glycosylation" value="6 sites, 1 O-linked glycan (4 sites)"/>
</dbReference>
<dbReference type="iPTMnet" id="P53125"/>
<dbReference type="PaxDb" id="4932-YGL133W"/>
<dbReference type="PeptideAtlas" id="P53125"/>
<dbReference type="EnsemblFungi" id="YGL133W_mRNA">
    <property type="protein sequence ID" value="YGL133W"/>
    <property type="gene ID" value="YGL133W"/>
</dbReference>
<dbReference type="GeneID" id="852744"/>
<dbReference type="KEGG" id="sce:YGL133W"/>
<dbReference type="AGR" id="SGD:S000003101"/>
<dbReference type="SGD" id="S000003101">
    <property type="gene designation" value="ITC1"/>
</dbReference>
<dbReference type="VEuPathDB" id="FungiDB:YGL133W"/>
<dbReference type="eggNOG" id="KOG1245">
    <property type="taxonomic scope" value="Eukaryota"/>
</dbReference>
<dbReference type="GeneTree" id="ENSGT00940000176599"/>
<dbReference type="HOGENOM" id="CLU_265647_0_0_1"/>
<dbReference type="InParanoid" id="P53125"/>
<dbReference type="OMA" id="GAPWCVK"/>
<dbReference type="OrthoDB" id="332390at2759"/>
<dbReference type="BioCyc" id="YEAST:G3O-30628-MONOMER"/>
<dbReference type="BioGRID-ORCS" id="852744">
    <property type="hits" value="0 hits in 10 CRISPR screens"/>
</dbReference>
<dbReference type="PRO" id="PR:P53125"/>
<dbReference type="Proteomes" id="UP000002311">
    <property type="component" value="Chromosome VII"/>
</dbReference>
<dbReference type="RNAct" id="P53125">
    <property type="molecule type" value="protein"/>
</dbReference>
<dbReference type="GO" id="GO:0008623">
    <property type="term" value="C:CHRAC"/>
    <property type="evidence" value="ECO:0000353"/>
    <property type="project" value="SGD"/>
</dbReference>
<dbReference type="GO" id="GO:0000781">
    <property type="term" value="C:chromosome, telomeric region"/>
    <property type="evidence" value="ECO:0007669"/>
    <property type="project" value="GOC"/>
</dbReference>
<dbReference type="GO" id="GO:0005634">
    <property type="term" value="C:nucleus"/>
    <property type="evidence" value="ECO:0007005"/>
    <property type="project" value="SGD"/>
</dbReference>
<dbReference type="GO" id="GO:0071444">
    <property type="term" value="P:cellular response to pheromone"/>
    <property type="evidence" value="ECO:0000315"/>
    <property type="project" value="SGD"/>
</dbReference>
<dbReference type="GO" id="GO:0006338">
    <property type="term" value="P:chromatin remodeling"/>
    <property type="evidence" value="ECO:0000314"/>
    <property type="project" value="ComplexPortal"/>
</dbReference>
<dbReference type="GO" id="GO:0000122">
    <property type="term" value="P:negative regulation of transcription by RNA polymerase II"/>
    <property type="evidence" value="ECO:0000315"/>
    <property type="project" value="SGD"/>
</dbReference>
<dbReference type="GO" id="GO:0006355">
    <property type="term" value="P:regulation of DNA-templated transcription"/>
    <property type="evidence" value="ECO:0000303"/>
    <property type="project" value="ComplexPortal"/>
</dbReference>
<dbReference type="GO" id="GO:0031509">
    <property type="term" value="P:subtelomeric heterochromatin formation"/>
    <property type="evidence" value="ECO:0000315"/>
    <property type="project" value="SGD"/>
</dbReference>
<dbReference type="InterPro" id="IPR018501">
    <property type="entry name" value="DDT_dom"/>
</dbReference>
<dbReference type="InterPro" id="IPR028941">
    <property type="entry name" value="WHIM2_dom"/>
</dbReference>
<dbReference type="InterPro" id="IPR013136">
    <property type="entry name" value="WSTF_Acf1_Cbp146"/>
</dbReference>
<dbReference type="PANTHER" id="PTHR32075">
    <property type="entry name" value="ISWI CHROMATIN-REMODELING COMPLEX SUBUNIT YPL216W-RELATED"/>
    <property type="match status" value="1"/>
</dbReference>
<dbReference type="PANTHER" id="PTHR32075:SF6">
    <property type="entry name" value="ISWI CHROMATIN-REMODELING COMPLEX SUBUNIT YPL216W-RELATED"/>
    <property type="match status" value="1"/>
</dbReference>
<dbReference type="Pfam" id="PF02791">
    <property type="entry name" value="DDT"/>
    <property type="match status" value="1"/>
</dbReference>
<dbReference type="Pfam" id="PF10537">
    <property type="entry name" value="WAC_Acf1_DNA_bd"/>
    <property type="match status" value="1"/>
</dbReference>
<dbReference type="Pfam" id="PF15613">
    <property type="entry name" value="WSD"/>
    <property type="match status" value="1"/>
</dbReference>
<dbReference type="SMART" id="SM00571">
    <property type="entry name" value="DDT"/>
    <property type="match status" value="1"/>
</dbReference>
<dbReference type="PROSITE" id="PS50827">
    <property type="entry name" value="DDT"/>
    <property type="match status" value="1"/>
</dbReference>
<dbReference type="PROSITE" id="PS51136">
    <property type="entry name" value="WAC"/>
    <property type="match status" value="1"/>
</dbReference>
<gene>
    <name type="primary">ITC1</name>
    <name type="ordered locus">YGL133W</name>
    <name type="ORF">G2842</name>
</gene>
<accession>P53125</accession>
<accession>D6VU16</accession>
<organism>
    <name type="scientific">Saccharomyces cerevisiae (strain ATCC 204508 / S288c)</name>
    <name type="common">Baker's yeast</name>
    <dbReference type="NCBI Taxonomy" id="559292"/>
    <lineage>
        <taxon>Eukaryota</taxon>
        <taxon>Fungi</taxon>
        <taxon>Dikarya</taxon>
        <taxon>Ascomycota</taxon>
        <taxon>Saccharomycotina</taxon>
        <taxon>Saccharomycetes</taxon>
        <taxon>Saccharomycetales</taxon>
        <taxon>Saccharomycetaceae</taxon>
        <taxon>Saccharomyces</taxon>
    </lineage>
</organism>
<reference key="1">
    <citation type="journal article" date="1996" name="Yeast">
        <title>Sequence analysis of a 14.6 kb DNA fragment of Saccharomyces cerevisiae chromosome VII reveals SEC27, SSM1b, a putative S-adenosylmethionine-dependent enzyme and six new open reading frames.</title>
        <authorList>
            <person name="Escribano V."/>
            <person name="Eraso P."/>
            <person name="Portillo F."/>
            <person name="Mazon M.J."/>
        </authorList>
    </citation>
    <scope>NUCLEOTIDE SEQUENCE [GENOMIC DNA]</scope>
    <source>
        <strain>ATCC 96604 / S288c / FY1679</strain>
    </source>
</reference>
<reference key="2">
    <citation type="journal article" date="1997" name="Nature">
        <title>The nucleotide sequence of Saccharomyces cerevisiae chromosome VII.</title>
        <authorList>
            <person name="Tettelin H."/>
            <person name="Agostoni-Carbone M.L."/>
            <person name="Albermann K."/>
            <person name="Albers M."/>
            <person name="Arroyo J."/>
            <person name="Backes U."/>
            <person name="Barreiros T."/>
            <person name="Bertani I."/>
            <person name="Bjourson A.J."/>
            <person name="Brueckner M."/>
            <person name="Bruschi C.V."/>
            <person name="Carignani G."/>
            <person name="Castagnoli L."/>
            <person name="Cerdan E."/>
            <person name="Clemente M.L."/>
            <person name="Coblenz A."/>
            <person name="Coglievina M."/>
            <person name="Coissac E."/>
            <person name="Defoor E."/>
            <person name="Del Bino S."/>
            <person name="Delius H."/>
            <person name="Delneri D."/>
            <person name="de Wergifosse P."/>
            <person name="Dujon B."/>
            <person name="Durand P."/>
            <person name="Entian K.-D."/>
            <person name="Eraso P."/>
            <person name="Escribano V."/>
            <person name="Fabiani L."/>
            <person name="Fartmann B."/>
            <person name="Feroli F."/>
            <person name="Feuermann M."/>
            <person name="Frontali L."/>
            <person name="Garcia-Gonzalez M."/>
            <person name="Garcia-Saez M.I."/>
            <person name="Goffeau A."/>
            <person name="Guerreiro P."/>
            <person name="Hani J."/>
            <person name="Hansen M."/>
            <person name="Hebling U."/>
            <person name="Hernandez K."/>
            <person name="Heumann K."/>
            <person name="Hilger F."/>
            <person name="Hofmann B."/>
            <person name="Indge K.J."/>
            <person name="James C.M."/>
            <person name="Klima R."/>
            <person name="Koetter P."/>
            <person name="Kramer B."/>
            <person name="Kramer W."/>
            <person name="Lauquin G."/>
            <person name="Leuther H."/>
            <person name="Louis E.J."/>
            <person name="Maillier E."/>
            <person name="Marconi A."/>
            <person name="Martegani E."/>
            <person name="Mazon M.J."/>
            <person name="Mazzoni C."/>
            <person name="McReynolds A.D.K."/>
            <person name="Melchioretto P."/>
            <person name="Mewes H.-W."/>
            <person name="Minenkova O."/>
            <person name="Mueller-Auer S."/>
            <person name="Nawrocki A."/>
            <person name="Netter P."/>
            <person name="Neu R."/>
            <person name="Nombela C."/>
            <person name="Oliver S.G."/>
            <person name="Panzeri L."/>
            <person name="Paoluzi S."/>
            <person name="Plevani P."/>
            <person name="Portetelle D."/>
            <person name="Portillo F."/>
            <person name="Potier S."/>
            <person name="Purnelle B."/>
            <person name="Rieger M."/>
            <person name="Riles L."/>
            <person name="Rinaldi T."/>
            <person name="Robben J."/>
            <person name="Rodrigues-Pousada C."/>
            <person name="Rodriguez-Belmonte E."/>
            <person name="Rodriguez-Torres A.M."/>
            <person name="Rose M."/>
            <person name="Ruzzi M."/>
            <person name="Saliola M."/>
            <person name="Sanchez-Perez M."/>
            <person name="Schaefer B."/>
            <person name="Schaefer M."/>
            <person name="Scharfe M."/>
            <person name="Schmidheini T."/>
            <person name="Schreer A."/>
            <person name="Skala J."/>
            <person name="Souciet J.-L."/>
            <person name="Steensma H.Y."/>
            <person name="Talla E."/>
            <person name="Thierry A."/>
            <person name="Vandenbol M."/>
            <person name="van der Aart Q.J.M."/>
            <person name="Van Dyck L."/>
            <person name="Vanoni M."/>
            <person name="Verhasselt P."/>
            <person name="Voet M."/>
            <person name="Volckaert G."/>
            <person name="Wambutt R."/>
            <person name="Watson M.D."/>
            <person name="Weber N."/>
            <person name="Wedler E."/>
            <person name="Wedler H."/>
            <person name="Wipfli P."/>
            <person name="Wolf K."/>
            <person name="Wright L.F."/>
            <person name="Zaccaria P."/>
            <person name="Zimmermann M."/>
            <person name="Zollner A."/>
            <person name="Kleine K."/>
        </authorList>
    </citation>
    <scope>NUCLEOTIDE SEQUENCE [LARGE SCALE GENOMIC DNA]</scope>
    <source>
        <strain>ATCC 204508 / S288c</strain>
    </source>
</reference>
<reference key="3">
    <citation type="journal article" date="2014" name="G3 (Bethesda)">
        <title>The reference genome sequence of Saccharomyces cerevisiae: Then and now.</title>
        <authorList>
            <person name="Engel S.R."/>
            <person name="Dietrich F.S."/>
            <person name="Fisk D.G."/>
            <person name="Binkley G."/>
            <person name="Balakrishnan R."/>
            <person name="Costanzo M.C."/>
            <person name="Dwight S.S."/>
            <person name="Hitz B.C."/>
            <person name="Karra K."/>
            <person name="Nash R.S."/>
            <person name="Weng S."/>
            <person name="Wong E.D."/>
            <person name="Lloyd P."/>
            <person name="Skrzypek M.S."/>
            <person name="Miyasato S.R."/>
            <person name="Simison M."/>
            <person name="Cherry J.M."/>
        </authorList>
    </citation>
    <scope>GENOME REANNOTATION</scope>
    <source>
        <strain>ATCC 204508 / S288c</strain>
    </source>
</reference>
<reference key="4">
    <citation type="journal article" date="2000" name="Cell">
        <title>The Isw2 chromatin remodeling complex represses early meiotic genes upon recruitment by Ume6p.</title>
        <authorList>
            <person name="Goldmark J.P."/>
            <person name="Fazzio T.G."/>
            <person name="Estep P.W."/>
            <person name="Church G.M."/>
            <person name="Tsukiyama T."/>
        </authorList>
    </citation>
    <scope>FUNCTION OF THE ISW2 COMPLEX</scope>
</reference>
<reference key="5">
    <citation type="journal article" date="2001" name="J. Bacteriol.">
        <title>The Saccharomyces cerevisiae Isw2p-Itc1p complex represses INO1 expression and maintains cell morphology.</title>
        <authorList>
            <person name="Sugiyama M."/>
            <person name="Nikawa J."/>
        </authorList>
    </citation>
    <scope>FUNCTION</scope>
</reference>
<reference key="6">
    <citation type="journal article" date="2001" name="Mol. Cell. Biol.">
        <title>Interactions of Isw2 chromatin remodeling complex with nucleosomal arrays: analyses using recombinant yeast histones and immobilized templates.</title>
        <authorList>
            <person name="Gelbart M.E."/>
            <person name="Rechsteiner T."/>
            <person name="Richmond T.J."/>
            <person name="Tsukiyama T."/>
        </authorList>
    </citation>
    <scope>FUNCTION OF THE ISW2 COMPLEX</scope>
    <scope>INTERACTION WITH ISW2</scope>
    <scope>SUBCELLULAR LOCATION</scope>
</reference>
<reference key="7">
    <citation type="journal article" date="2001" name="Mol. Cell. Biol.">
        <title>Widespread collaboration of Isw2 and Sin3-Rpd3 chromatin remodeling complexes in transcriptional repression.</title>
        <authorList>
            <person name="Fazzio T.G."/>
            <person name="Kooperberg C."/>
            <person name="Goldmark J.P."/>
            <person name="Neal C."/>
            <person name="Basom R."/>
            <person name="Delrow J."/>
            <person name="Tsukiyama T."/>
        </authorList>
    </citation>
    <scope>FUNCTION OF THE ISW2 COMPLEX</scope>
</reference>
<reference key="8">
    <citation type="journal article" date="2003" name="Microbiology">
        <title>Cell-type-dependent repression of yeast a-specific genes requires Itc1p, a subunit of the Isw2p-Itc1p chromatin remodelling complex.</title>
        <authorList>
            <person name="Ruiz C."/>
            <person name="Escribano V."/>
            <person name="Morgado E."/>
            <person name="Molina M."/>
            <person name="Mazon M.J."/>
        </authorList>
    </citation>
    <scope>FUNCTION</scope>
</reference>
<reference key="9">
    <citation type="journal article" date="2003" name="Nature">
        <title>Global analysis of protein expression in yeast.</title>
        <authorList>
            <person name="Ghaemmaghami S."/>
            <person name="Huh W.-K."/>
            <person name="Bower K."/>
            <person name="Howson R.W."/>
            <person name="Belle A."/>
            <person name="Dephoure N."/>
            <person name="O'Shea E.K."/>
            <person name="Weissman J.S."/>
        </authorList>
    </citation>
    <scope>LEVEL OF PROTEIN EXPRESSION [LARGE SCALE ANALYSIS]</scope>
</reference>
<reference key="10">
    <citation type="journal article" date="2004" name="Mol. Cell. Biol.">
        <title>Noncompetitive counteractions of DNA polymerase epsilon and ISW2/yCHRAC for epigenetic inheritance of telomere position effect in Saccharomyces cerevisiae.</title>
        <authorList>
            <person name="Iida T."/>
            <person name="Araki H."/>
        </authorList>
    </citation>
    <scope>IDENTIFICATION IN THE ISW2 COMPLEX</scope>
    <scope>FUNCTION OF THE ISW2 COMPLEX</scope>
</reference>
<reference key="11">
    <citation type="journal article" date="2004" name="Mol. Cell. Biol.">
        <title>Histone fold protein Dls1p is required for Isw2-dependent chromatin remodeling in vivo.</title>
        <authorList>
            <person name="McConnell A.D."/>
            <person name="Gelbart M.E."/>
            <person name="Tsukiyama T."/>
        </authorList>
    </citation>
    <scope>IDENTIFICATION IN THE ISW2 COMPLEX</scope>
</reference>
<reference key="12">
    <citation type="journal article" date="2007" name="Proc. Natl. Acad. Sci. U.S.A.">
        <title>Analysis of phosphorylation sites on proteins from Saccharomyces cerevisiae by electron transfer dissociation (ETD) mass spectrometry.</title>
        <authorList>
            <person name="Chi A."/>
            <person name="Huttenhower C."/>
            <person name="Geer L.Y."/>
            <person name="Coon J.J."/>
            <person name="Syka J.E.P."/>
            <person name="Bai D.L."/>
            <person name="Shabanowitz J."/>
            <person name="Burke D.J."/>
            <person name="Troyanskaya O.G."/>
            <person name="Hunt D.F."/>
        </authorList>
    </citation>
    <scope>IDENTIFICATION BY MASS SPECTROMETRY [LARGE SCALE ANALYSIS]</scope>
</reference>
<reference key="13">
    <citation type="journal article" date="2008" name="Mol. Cell. Proteomics">
        <title>A multidimensional chromatography technology for in-depth phosphoproteome analysis.</title>
        <authorList>
            <person name="Albuquerque C.P."/>
            <person name="Smolka M.B."/>
            <person name="Payne S.H."/>
            <person name="Bafna V."/>
            <person name="Eng J."/>
            <person name="Zhou H."/>
        </authorList>
    </citation>
    <scope>IDENTIFICATION BY MASS SPECTROMETRY [LARGE SCALE ANALYSIS]</scope>
</reference>
<sequence length="1264" mass="145643">MVLYKRKPILLPDPKPLPLDLNVQVWHIEETGEWFSSYEEFLERFDFYTRHHFTCEITGTSCLTFFQALDSEETQFKYVEDRFPLKLREPVARFLHFNGIRRLDALVEKVYARFKNDFFPGEVVYLRKQKDSSTTSSNSQQSTPQPDDMVEINSVGNPGLPQYQYQRRYVIKEKVQFNATINPESREIVMPAHTKYMLIEEAASSNKSFIVDQGQIYRDRSTFTKHLIKCFFKITLQRASSKMGAPWCVKPEYLAMYGLTMEWPKDMLKYKEDEPVVARRSNSANVSSPESEKNKRQSKSSGKSNTSNDASNKKETKKKRKPTEVNDSENNSSEEDKKKGQNVTSETHSKKRKKEANEEPNTENVESVPTPANAEPQAVTITSIMDDLALPYQHPPNIFPNLTYYNEKLECISLGSTKLSRPFDSFGKLLQAYQFLNTFGSKICLSHFSLDQFITSLKCTDPYELKGEVVLVNIRTQTSKEQEIENNGLPMKNKAETTTEEDSENPSDWQRNSFIRDMIMKRNSDKVEYKIVHDDPASDDILDNINHNGSALLIEVFTALLRLFINEEGDWSCIVVENWIIDDKGVLMERKDERGEGEAKQKRNAHGYFLQDKEKIDNLKDTLKENATEVQKESDAKNETNSESDSKSDSDSEERDPKLEKCLNYRNVNWIERLTKRQFNNSYWLIILLGVLEDCRHLPMYTEFIDSFIEKIIPKDISATQLPKQLWRNFCRKLSFSDKVNALWILVDLVSHFSPDIKAAVDDSMELCGQIRSERFKVARELKTEAAVLSNLQGDLQAIQEKLNKTDENTPSADGADKKDDSESNSEPIDLIIIEKKQKLIEEQDKKVQALQSDKNFLDNCLFENDLQRLKPLGLDRYGNRYFWLDHNGVPFPQYPAGMNETPKSNNSLSYHSGRLLIQGPKASSAKFFLNVSDEQLSNWQKIRNSEGISEATREVFGISKTSSGSYNYVENGIEVELLDSNDRVNPLIELTPIQKKIMDETPSRLLLSPDQWYCIDKLEDLSRIMDWLDNWGRKEHDLLRQIRPIMERIKSSLSLRDHALSLTAFTKNEEKLLKELENNEFTENELNVDSMDVDDKNSGVKSEVDVQVDAEEKREAVIDEKLEVIADELMKLDDSSKTRNVLNRIQELEDQRDELLEQKKSIINSQRPGARILARSERKRTKISRGNKVNKQIEILTDLVNYRHFKAMEDVIAWKNVLANSIWGSSLRKNASGNKRSGVIETVDDKLKDIVGQTSRTVTPAPN</sequence>
<comment type="function">
    <text evidence="4 5 6 7 8 10">Functions as a component of the ISW2 complex, which acts in remodeling the chromatin by catalyzing an ATP-dependent alteration in the structure of nucleosomal DNA. The ISW2 complex is involved in coordinating transcriptional repression and in inheritance of telomeric silencing. It is involved in repression of MAT a-specific genes, INO1, and early meiotic genes during mitotic growth dependent upon transcription factor UME6 and in a parallel pathway to the RPD3-SIN3 histone deacetylase complex. ITC1 is required for nucleosome-stimulated ATPase activity and chromatin-remodeling activity of the complex. Required for the repression of MATa a-specific genes.</text>
</comment>
<comment type="subunit">
    <text evidence="10 11">Component of the ISW2 complex, which at least consists of ISW2, ITC1, DLS1 and DPB4. May form a stable subcomplex with ISW2.</text>
</comment>
<comment type="interaction">
    <interactant intactId="EBI-23967">
        <id>P53125</id>
    </interactant>
    <interactant intactId="EBI-31118">
        <id>Q08773</id>
        <label>ISW2</label>
    </interactant>
    <organismsDiffer>false</organismsDiffer>
    <experiments>3</experiments>
</comment>
<comment type="subcellular location">
    <subcellularLocation>
        <location evidence="1 2 5">Nucleus</location>
    </subcellularLocation>
</comment>
<comment type="miscellaneous">
    <text evidence="9">Present with 2610 molecules/cell in log phase SD medium.</text>
</comment>